<keyword id="KW-1185">Reference proteome</keyword>
<organism>
    <name type="scientific">Enterobacteria phage T4</name>
    <name type="common">Bacteriophage T4</name>
    <dbReference type="NCBI Taxonomy" id="10665"/>
    <lineage>
        <taxon>Viruses</taxon>
        <taxon>Duplodnaviria</taxon>
        <taxon>Heunggongvirae</taxon>
        <taxon>Uroviricota</taxon>
        <taxon>Caudoviricetes</taxon>
        <taxon>Straboviridae</taxon>
        <taxon>Tevenvirinae</taxon>
        <taxon>Tequatrovirus</taxon>
    </lineage>
</organism>
<proteinExistence type="predicted"/>
<reference key="1">
    <citation type="journal article" date="1990" name="Gene">
        <title>The bacteriophage T4 gene mrh whose product inhibits late T4 gene expression in an Escherichia coli rpoH (sigma 32) mutant.</title>
        <authorList>
            <person name="Frazier M.W."/>
            <person name="Mosig G."/>
        </authorList>
    </citation>
    <scope>NUCLEOTIDE SEQUENCE [GENOMIC DNA]</scope>
</reference>
<reference key="2">
    <citation type="journal article" date="2003" name="Microbiol. Mol. Biol. Rev.">
        <title>Bacteriophage T4 genome.</title>
        <authorList>
            <person name="Miller E.S."/>
            <person name="Kutter E."/>
            <person name="Mosig G."/>
            <person name="Arisaka F."/>
            <person name="Kunisawa T."/>
            <person name="Ruger W."/>
        </authorList>
    </citation>
    <scope>NUCLEOTIDE SEQUENCE [LARGE SCALE GENOMIC DNA]</scope>
</reference>
<name>Y01F_BPT4</name>
<organismHost>
    <name type="scientific">Escherichia coli</name>
    <dbReference type="NCBI Taxonomy" id="562"/>
</organismHost>
<sequence length="156" mass="18331">MIEVAKLYSIEFMSKEGKSVNTLDKNCSLIIPLAENPDFLIKDIKERKYPENIILIIKHTEDILQNTDSPFSSSEALTIKGYKRAHEYGLFDMFEDDKVKLASQPSKSKTFIIEDIKDINAFVRMVWAHFDVGLRWRMSEEERKIIETNRKFGFYR</sequence>
<protein>
    <recommendedName>
        <fullName>Uncharacterized 18.3 kDa protein in modB-mrh intergenic region</fullName>
    </recommendedName>
</protein>
<gene>
    <name type="primary">y01F</name>
    <name type="synonym">dda.7</name>
    <name type="synonym">modA.3</name>
</gene>
<accession>P39425</accession>
<feature type="chain" id="PRO_0000165087" description="Uncharacterized 18.3 kDa protein in modB-mrh intergenic region">
    <location>
        <begin position="1"/>
        <end position="156"/>
    </location>
</feature>
<dbReference type="EMBL" id="M30001">
    <property type="protein sequence ID" value="AAB07799.1"/>
    <property type="molecule type" value="Genomic_DNA"/>
</dbReference>
<dbReference type="EMBL" id="AF158101">
    <property type="protein sequence ID" value="AAD42604.1"/>
    <property type="molecule type" value="Genomic_DNA"/>
</dbReference>
<dbReference type="PIR" id="T10140">
    <property type="entry name" value="T10140"/>
</dbReference>
<dbReference type="RefSeq" id="NP_049638.1">
    <property type="nucleotide sequence ID" value="NC_000866.4"/>
</dbReference>
<dbReference type="GeneID" id="1258730"/>
<dbReference type="KEGG" id="vg:1258730"/>
<dbReference type="OrthoDB" id="11266at10239"/>
<dbReference type="Proteomes" id="UP000009087">
    <property type="component" value="Segment"/>
</dbReference>
<dbReference type="InterPro" id="IPR056941">
    <property type="entry name" value="Mrh-like"/>
</dbReference>
<dbReference type="Pfam" id="PF24070">
    <property type="entry name" value="T4_MRH"/>
    <property type="match status" value="1"/>
</dbReference>